<evidence type="ECO:0000269" key="1">
    <source>
    </source>
</evidence>
<evidence type="ECO:0000303" key="2">
    <source>
    </source>
</evidence>
<evidence type="ECO:0000305" key="3"/>
<dbReference type="EC" id="2.7.1.32" evidence="1"/>
<dbReference type="EMBL" id="AY158691">
    <property type="protein sequence ID" value="AAN41643.1"/>
    <property type="molecule type" value="mRNA"/>
</dbReference>
<dbReference type="EMBL" id="Z34533">
    <property type="protein sequence ID" value="CAA84301.2"/>
    <property type="molecule type" value="Genomic_DNA"/>
</dbReference>
<dbReference type="PIR" id="T18696">
    <property type="entry name" value="T18696"/>
</dbReference>
<dbReference type="RefSeq" id="NP_497880.2">
    <property type="nucleotide sequence ID" value="NM_065479.6"/>
</dbReference>
<dbReference type="SMR" id="P46559"/>
<dbReference type="BioGRID" id="40801">
    <property type="interactions" value="4"/>
</dbReference>
<dbReference type="FunCoup" id="P46559">
    <property type="interactions" value="88"/>
</dbReference>
<dbReference type="STRING" id="6239.B0285.9.2"/>
<dbReference type="iPTMnet" id="P46559"/>
<dbReference type="PaxDb" id="6239-B0285.9"/>
<dbReference type="PeptideAtlas" id="P46559"/>
<dbReference type="EnsemblMetazoa" id="B0285.9.1">
    <property type="protein sequence ID" value="B0285.9.1"/>
    <property type="gene ID" value="WBGene00000512"/>
</dbReference>
<dbReference type="GeneID" id="175565"/>
<dbReference type="KEGG" id="cel:CELE_B0285.9"/>
<dbReference type="UCSC" id="B0285.9">
    <property type="organism name" value="c. elegans"/>
</dbReference>
<dbReference type="AGR" id="WB:WBGene00000512"/>
<dbReference type="CTD" id="175565"/>
<dbReference type="WormBase" id="B0285.9">
    <property type="protein sequence ID" value="CE33591"/>
    <property type="gene ID" value="WBGene00000512"/>
    <property type="gene designation" value="ckb-2"/>
</dbReference>
<dbReference type="eggNOG" id="KOG2686">
    <property type="taxonomic scope" value="Eukaryota"/>
</dbReference>
<dbReference type="GeneTree" id="ENSGT00950000182939"/>
<dbReference type="HOGENOM" id="CLU_012712_2_0_1"/>
<dbReference type="InParanoid" id="P46559"/>
<dbReference type="OMA" id="FGWAIND"/>
<dbReference type="OrthoDB" id="10267235at2759"/>
<dbReference type="PhylomeDB" id="P46559"/>
<dbReference type="Reactome" id="R-CEL-1483191">
    <property type="pathway name" value="Synthesis of PC"/>
</dbReference>
<dbReference type="Reactome" id="R-CEL-1483213">
    <property type="pathway name" value="Synthesis of PE"/>
</dbReference>
<dbReference type="UniPathway" id="UPA00753">
    <property type="reaction ID" value="UER00737"/>
</dbReference>
<dbReference type="PRO" id="PR:P46559"/>
<dbReference type="Proteomes" id="UP000001940">
    <property type="component" value="Chromosome III"/>
</dbReference>
<dbReference type="Bgee" id="WBGene00000512">
    <property type="expression patterns" value="Expressed in germ line (C elegans) and 4 other cell types or tissues"/>
</dbReference>
<dbReference type="GO" id="GO:0005737">
    <property type="term" value="C:cytoplasm"/>
    <property type="evidence" value="ECO:0000318"/>
    <property type="project" value="GO_Central"/>
</dbReference>
<dbReference type="GO" id="GO:0005524">
    <property type="term" value="F:ATP binding"/>
    <property type="evidence" value="ECO:0007669"/>
    <property type="project" value="UniProtKB-KW"/>
</dbReference>
<dbReference type="GO" id="GO:0004103">
    <property type="term" value="F:choline kinase activity"/>
    <property type="evidence" value="ECO:0000314"/>
    <property type="project" value="WormBase"/>
</dbReference>
<dbReference type="GO" id="GO:0004305">
    <property type="term" value="F:ethanolamine kinase activity"/>
    <property type="evidence" value="ECO:0000318"/>
    <property type="project" value="GO_Central"/>
</dbReference>
<dbReference type="GO" id="GO:0006657">
    <property type="term" value="P:CDP-choline pathway"/>
    <property type="evidence" value="ECO:0000314"/>
    <property type="project" value="WormBase"/>
</dbReference>
<dbReference type="GO" id="GO:0030968">
    <property type="term" value="P:endoplasmic reticulum unfolded protein response"/>
    <property type="evidence" value="ECO:0007007"/>
    <property type="project" value="WormBase"/>
</dbReference>
<dbReference type="GO" id="GO:0036498">
    <property type="term" value="P:IRE1-mediated unfolded protein response"/>
    <property type="evidence" value="ECO:0000314"/>
    <property type="project" value="WormBase"/>
</dbReference>
<dbReference type="GO" id="GO:0006646">
    <property type="term" value="P:phosphatidylethanolamine biosynthetic process"/>
    <property type="evidence" value="ECO:0000318"/>
    <property type="project" value="GO_Central"/>
</dbReference>
<dbReference type="Gene3D" id="3.90.1200.10">
    <property type="match status" value="1"/>
</dbReference>
<dbReference type="Gene3D" id="3.30.200.20">
    <property type="entry name" value="Phosphorylase Kinase, domain 1"/>
    <property type="match status" value="1"/>
</dbReference>
<dbReference type="InterPro" id="IPR011009">
    <property type="entry name" value="Kinase-like_dom_sf"/>
</dbReference>
<dbReference type="PANTHER" id="PTHR22603:SF25">
    <property type="entry name" value="CHOLINE KINASE B1-RELATED"/>
    <property type="match status" value="1"/>
</dbReference>
<dbReference type="PANTHER" id="PTHR22603">
    <property type="entry name" value="CHOLINE/ETHANOALAMINE KINASE"/>
    <property type="match status" value="1"/>
</dbReference>
<dbReference type="Pfam" id="PF01633">
    <property type="entry name" value="Choline_kinase"/>
    <property type="match status" value="1"/>
</dbReference>
<dbReference type="SUPFAM" id="SSF56112">
    <property type="entry name" value="Protein kinase-like (PK-like)"/>
    <property type="match status" value="1"/>
</dbReference>
<reference key="1">
    <citation type="journal article" date="2003" name="Biochim. Biophys. Acta">
        <title>Multiple isoforms of choline kinase from Caenorhabditis elegans: cloning, expression, purification, and characterization.</title>
        <authorList>
            <person name="Gee P."/>
            <person name="Kent C."/>
        </authorList>
    </citation>
    <scope>NUCLEOTIDE SEQUENCE [MRNA]</scope>
    <scope>FUNCTION</scope>
    <scope>CATALYTIC ACTIVITY</scope>
    <scope>COFACTOR</scope>
    <scope>BIOPHYSICOCHEMICAL PROPERTIES</scope>
    <scope>PATHWAY</scope>
</reference>
<reference key="2">
    <citation type="journal article" date="1998" name="Science">
        <title>Genome sequence of the nematode C. elegans: a platform for investigating biology.</title>
        <authorList>
            <consortium name="The C. elegans sequencing consortium"/>
        </authorList>
    </citation>
    <scope>NUCLEOTIDE SEQUENCE [LARGE SCALE GENOMIC DNA]</scope>
    <source>
        <strain>Bristol N2</strain>
    </source>
</reference>
<keyword id="KW-0067">ATP-binding</keyword>
<keyword id="KW-0418">Kinase</keyword>
<keyword id="KW-0444">Lipid biosynthesis</keyword>
<keyword id="KW-0443">Lipid metabolism</keyword>
<keyword id="KW-0460">Magnesium</keyword>
<keyword id="KW-0547">Nucleotide-binding</keyword>
<keyword id="KW-0594">Phospholipid biosynthesis</keyword>
<keyword id="KW-1208">Phospholipid metabolism</keyword>
<keyword id="KW-1185">Reference proteome</keyword>
<keyword id="KW-0808">Transferase</keyword>
<comment type="function">
    <text evidence="1">Catalyzes the first step in phosphatidylcholine biosynthesis. Phosphorylates choline.</text>
</comment>
<comment type="catalytic activity">
    <reaction evidence="1">
        <text>choline + ATP = phosphocholine + ADP + H(+)</text>
        <dbReference type="Rhea" id="RHEA:12837"/>
        <dbReference type="ChEBI" id="CHEBI:15354"/>
        <dbReference type="ChEBI" id="CHEBI:15378"/>
        <dbReference type="ChEBI" id="CHEBI:30616"/>
        <dbReference type="ChEBI" id="CHEBI:295975"/>
        <dbReference type="ChEBI" id="CHEBI:456216"/>
        <dbReference type="EC" id="2.7.1.32"/>
    </reaction>
</comment>
<comment type="cofactor">
    <cofactor evidence="1">
        <name>Mg(2+)</name>
        <dbReference type="ChEBI" id="CHEBI:18420"/>
    </cofactor>
    <text evidence="1">Less efficient with Mn(2+).</text>
</comment>
<comment type="biophysicochemical properties">
    <kinetics>
        <KM evidence="1">13 mM for choline (at 37 degrees Celsius and pH 10)</KM>
        <KM evidence="1">0.72 mM for ATP (at 37 degrees Celsius and pH 10)</KM>
        <Vmax evidence="1">5.4 umol/min/mg enzyme (at 37 degrees Celsius and pH 10)</Vmax>
    </kinetics>
    <phDependence>
        <text evidence="1">Optimum pH is 10.</text>
    </phDependence>
</comment>
<comment type="pathway">
    <text evidence="1">Phospholipid metabolism; phosphatidylcholine biosynthesis; phosphocholine from choline: step 1/1.</text>
</comment>
<comment type="similarity">
    <text evidence="3">Belongs to the choline/ethanolamine kinase family.</text>
</comment>
<protein>
    <recommendedName>
        <fullName evidence="2">Choline kinase B2</fullName>
        <ecNumber evidence="1">2.7.1.32</ecNumber>
    </recommendedName>
</protein>
<gene>
    <name type="primary">ckb-2</name>
    <name type="ORF">B0285.9</name>
</gene>
<accession>P46559</accession>
<accession>Q8IS23</accession>
<sequence>MTAIEKFFTEKSPDSEQVLLKVIELGIDFLGGEWKNVDKSQVNVSRVHGGQSNHMFHVTSSTSATPYLLRIHRQPPSQVFTDTVNLAIFSERGLGPKLYGFFEGGRMEEFLPSKTFDVNDVLVPENSRKIGAIFPLYHSINVPVSKSRRCVHLMREWLNGYESLGGGDYEILPTTVNYSDHPKSVSIKDLNHEIDNFEKWSTEIFEHTLVFSHNDLASTNILELNSTKELVLIDWEFGTYNWRGFDLAMHLSETAIDYRVPFPPGIKMNGDLIDNPPNIQIFCEAYVEADKKLKNRSPSDPTAEVKALIQECQFFWPLTNLFWALSAMKHSLLKFENGVDLDVQARDRLAVYFHLKPRSQKIYEELSKK</sequence>
<name>CKB2_CAEEL</name>
<organism>
    <name type="scientific">Caenorhabditis elegans</name>
    <dbReference type="NCBI Taxonomy" id="6239"/>
    <lineage>
        <taxon>Eukaryota</taxon>
        <taxon>Metazoa</taxon>
        <taxon>Ecdysozoa</taxon>
        <taxon>Nematoda</taxon>
        <taxon>Chromadorea</taxon>
        <taxon>Rhabditida</taxon>
        <taxon>Rhabditina</taxon>
        <taxon>Rhabditomorpha</taxon>
        <taxon>Rhabditoidea</taxon>
        <taxon>Rhabditidae</taxon>
        <taxon>Peloderinae</taxon>
        <taxon>Caenorhabditis</taxon>
    </lineage>
</organism>
<feature type="chain" id="PRO_0000206233" description="Choline kinase B2">
    <location>
        <begin position="1"/>
        <end position="369"/>
    </location>
</feature>
<proteinExistence type="evidence at protein level"/>